<organism>
    <name type="scientific">Hahella chejuensis (strain KCTC 2396)</name>
    <dbReference type="NCBI Taxonomy" id="349521"/>
    <lineage>
        <taxon>Bacteria</taxon>
        <taxon>Pseudomonadati</taxon>
        <taxon>Pseudomonadota</taxon>
        <taxon>Gammaproteobacteria</taxon>
        <taxon>Oceanospirillales</taxon>
        <taxon>Hahellaceae</taxon>
        <taxon>Hahella</taxon>
    </lineage>
</organism>
<proteinExistence type="inferred from homology"/>
<sequence>MKKQIFFTLILLISGLARADLVIEIDKGSRAAIPVAVVPFANESGQPLAEDIGQIFTEDLKRSGDIEPLDRTKMVSIPSKAEEIYFRDWGLLGQRYLLVGGVQYDAPSQVYKVRYELYNVQSQQRVIGKIISGKSEKLRDMGHAIADAVYEAVTGIRGVFSTRIAYVTLEKSGAKNIYRLEVADADGRRSTELLKRSMPIISPAWSPDGKKLAYVSFESQRPAIYVQDVDTGTRTQVTSFKGLNSAPTWSPDGTKLAVTLSKDGNAELYVLDLRNNSLKRLTNHWAIDTEASWSPDGRTIAFTSDRGGGPQIYLVDASGGSPRRLTFEGRYNSRPRFSVDGKKVYYVHQRDGSFNVASLDLESGQDQILTQTEMDESPSVAPNGSMIIYATQKNGKGVLAVVGVNSGSKYTLPAQFGDVREPAWSPYISR</sequence>
<reference key="1">
    <citation type="journal article" date="2005" name="Nucleic Acids Res.">
        <title>Genomic blueprint of Hahella chejuensis, a marine microbe producing an algicidal agent.</title>
        <authorList>
            <person name="Jeong H."/>
            <person name="Yim J.H."/>
            <person name="Lee C."/>
            <person name="Choi S.-H."/>
            <person name="Park Y.K."/>
            <person name="Yoon S.H."/>
            <person name="Hur C.-G."/>
            <person name="Kang H.-Y."/>
            <person name="Kim D."/>
            <person name="Lee H.H."/>
            <person name="Park K.H."/>
            <person name="Park S.-H."/>
            <person name="Park H.-S."/>
            <person name="Lee H.K."/>
            <person name="Oh T.K."/>
            <person name="Kim J.F."/>
        </authorList>
    </citation>
    <scope>NUCLEOTIDE SEQUENCE [LARGE SCALE GENOMIC DNA]</scope>
    <source>
        <strain>KCTC 2396</strain>
    </source>
</reference>
<protein>
    <recommendedName>
        <fullName evidence="1">Tol-Pal system protein TolB</fullName>
    </recommendedName>
</protein>
<comment type="function">
    <text evidence="1">Part of the Tol-Pal system, which plays a role in outer membrane invagination during cell division and is important for maintaining outer membrane integrity.</text>
</comment>
<comment type="subunit">
    <text evidence="1">The Tol-Pal system is composed of five core proteins: the inner membrane proteins TolA, TolQ and TolR, the periplasmic protein TolB and the outer membrane protein Pal. They form a network linking the inner and outer membranes and the peptidoglycan layer.</text>
</comment>
<comment type="subcellular location">
    <subcellularLocation>
        <location evidence="1">Periplasm</location>
    </subcellularLocation>
</comment>
<comment type="similarity">
    <text evidence="1">Belongs to the TolB family.</text>
</comment>
<keyword id="KW-0131">Cell cycle</keyword>
<keyword id="KW-0132">Cell division</keyword>
<keyword id="KW-0574">Periplasm</keyword>
<keyword id="KW-1185">Reference proteome</keyword>
<keyword id="KW-0732">Signal</keyword>
<evidence type="ECO:0000255" key="1">
    <source>
        <dbReference type="HAMAP-Rule" id="MF_00671"/>
    </source>
</evidence>
<accession>Q2SCL8</accession>
<gene>
    <name evidence="1" type="primary">tolB</name>
    <name type="ordered locus">HCH_04915</name>
</gene>
<feature type="signal peptide" evidence="1">
    <location>
        <begin position="1"/>
        <end position="19"/>
    </location>
</feature>
<feature type="chain" id="PRO_0000259052" description="Tol-Pal system protein TolB" evidence="1">
    <location>
        <begin position="20"/>
        <end position="430"/>
    </location>
</feature>
<name>TOLB_HAHCH</name>
<dbReference type="EMBL" id="CP000155">
    <property type="protein sequence ID" value="ABC31606.1"/>
    <property type="molecule type" value="Genomic_DNA"/>
</dbReference>
<dbReference type="RefSeq" id="WP_011398671.1">
    <property type="nucleotide sequence ID" value="NC_007645.1"/>
</dbReference>
<dbReference type="SMR" id="Q2SCL8"/>
<dbReference type="STRING" id="349521.HCH_04915"/>
<dbReference type="KEGG" id="hch:HCH_04915"/>
<dbReference type="eggNOG" id="COG0823">
    <property type="taxonomic scope" value="Bacteria"/>
</dbReference>
<dbReference type="eggNOG" id="COG5616">
    <property type="taxonomic scope" value="Bacteria"/>
</dbReference>
<dbReference type="HOGENOM" id="CLU_047123_0_0_6"/>
<dbReference type="OrthoDB" id="9802240at2"/>
<dbReference type="Proteomes" id="UP000000238">
    <property type="component" value="Chromosome"/>
</dbReference>
<dbReference type="GO" id="GO:0042597">
    <property type="term" value="C:periplasmic space"/>
    <property type="evidence" value="ECO:0007669"/>
    <property type="project" value="UniProtKB-SubCell"/>
</dbReference>
<dbReference type="GO" id="GO:0051301">
    <property type="term" value="P:cell division"/>
    <property type="evidence" value="ECO:0007669"/>
    <property type="project" value="UniProtKB-UniRule"/>
</dbReference>
<dbReference type="GO" id="GO:0017038">
    <property type="term" value="P:protein import"/>
    <property type="evidence" value="ECO:0007669"/>
    <property type="project" value="InterPro"/>
</dbReference>
<dbReference type="Gene3D" id="2.120.10.30">
    <property type="entry name" value="TolB, C-terminal domain"/>
    <property type="match status" value="1"/>
</dbReference>
<dbReference type="Gene3D" id="3.40.50.10070">
    <property type="entry name" value="TolB, N-terminal domain"/>
    <property type="match status" value="1"/>
</dbReference>
<dbReference type="HAMAP" id="MF_00671">
    <property type="entry name" value="TolB"/>
    <property type="match status" value="1"/>
</dbReference>
<dbReference type="InterPro" id="IPR011042">
    <property type="entry name" value="6-blade_b-propeller_TolB-like"/>
</dbReference>
<dbReference type="InterPro" id="IPR011659">
    <property type="entry name" value="PD40"/>
</dbReference>
<dbReference type="InterPro" id="IPR014167">
    <property type="entry name" value="Tol-Pal_TolB"/>
</dbReference>
<dbReference type="InterPro" id="IPR007195">
    <property type="entry name" value="TolB_N"/>
</dbReference>
<dbReference type="NCBIfam" id="TIGR02800">
    <property type="entry name" value="propeller_TolB"/>
    <property type="match status" value="1"/>
</dbReference>
<dbReference type="PANTHER" id="PTHR36842:SF1">
    <property type="entry name" value="PROTEIN TOLB"/>
    <property type="match status" value="1"/>
</dbReference>
<dbReference type="PANTHER" id="PTHR36842">
    <property type="entry name" value="PROTEIN TOLB HOMOLOG"/>
    <property type="match status" value="1"/>
</dbReference>
<dbReference type="Pfam" id="PF07676">
    <property type="entry name" value="PD40"/>
    <property type="match status" value="5"/>
</dbReference>
<dbReference type="Pfam" id="PF04052">
    <property type="entry name" value="TolB_N"/>
    <property type="match status" value="1"/>
</dbReference>
<dbReference type="SUPFAM" id="SSF52964">
    <property type="entry name" value="TolB, N-terminal domain"/>
    <property type="match status" value="1"/>
</dbReference>
<dbReference type="SUPFAM" id="SSF69304">
    <property type="entry name" value="Tricorn protease N-terminal domain"/>
    <property type="match status" value="1"/>
</dbReference>